<sequence length="425" mass="46017">MTRLDSVERAVADIAAGKAVIVIDDEDRENEGDLIFAAEKATPEMVAFMVRYTSGYLCVPLDGAICDRLGLLPMYAVNQDKHGTAYTVTVDARNGIGTGISASDRATTMRLLADPTSVADDFTRPGHVVPLRAKDGGVLRRPGHTEAAVDLARMAGLQPAGAICEIVSQKDEGSMAHTDELRVFADEHGLALITIADLIEWRRKHEKHIERVAEARIPTRHGEFRAIGYTSIYEDVEHVALVRGEIAGPNADGDDVLVRVHSECLTGDVFGSRRCDCGPQLDAALAMVAREGRGVVLYMRGHEGRGIGLMHKLQAYQLQDAGADTVDANLKLGLPADARDYGIGAQILVDLGVRSMRLLTNNPAKRVGLDGYGLHIIERVPLPVRANAENIRYLMTKRDKLGHDLAGLDDFHESVHLPGEFGGAL</sequence>
<accession>P0A5V1</accession>
<accession>A0A1R3Y0E2</accession>
<accession>O07714</accession>
<accession>P71684</accession>
<accession>X2BI18</accession>
<gene>
    <name evidence="1" type="primary">ribBA</name>
    <name type="synonym">ribA2</name>
    <name type="ordered locus">BQ2027_MB1450</name>
</gene>
<proteinExistence type="inferred from homology"/>
<feature type="chain" id="PRO_0000151727" description="Riboflavin biosynthesis protein RibBA">
    <location>
        <begin position="1"/>
        <end position="425"/>
    </location>
</feature>
<feature type="region of interest" description="DHBP synthase">
    <location>
        <begin position="1"/>
        <end position="204"/>
    </location>
</feature>
<feature type="region of interest" description="GTP cyclohydrolase II">
    <location>
        <begin position="205"/>
        <end position="425"/>
    </location>
</feature>
<feature type="active site" description="Proton acceptor; for GTP cyclohydrolase activity" evidence="1">
    <location>
        <position position="337"/>
    </location>
</feature>
<feature type="active site" description="Nucleophile; for GTP cyclohydrolase activity" evidence="1">
    <location>
        <position position="339"/>
    </location>
</feature>
<feature type="binding site" evidence="1">
    <location>
        <begin position="28"/>
        <end position="29"/>
    </location>
    <ligand>
        <name>D-ribulose 5-phosphate</name>
        <dbReference type="ChEBI" id="CHEBI:58121"/>
    </ligand>
</feature>
<feature type="binding site" evidence="1">
    <location>
        <position position="29"/>
    </location>
    <ligand>
        <name>Mg(2+)</name>
        <dbReference type="ChEBI" id="CHEBI:18420"/>
        <label>1</label>
    </ligand>
</feature>
<feature type="binding site" evidence="1">
    <location>
        <position position="29"/>
    </location>
    <ligand>
        <name>Mg(2+)</name>
        <dbReference type="ChEBI" id="CHEBI:18420"/>
        <label>2</label>
    </ligand>
</feature>
<feature type="binding site" evidence="1">
    <location>
        <position position="33"/>
    </location>
    <ligand>
        <name>D-ribulose 5-phosphate</name>
        <dbReference type="ChEBI" id="CHEBI:58121"/>
    </ligand>
</feature>
<feature type="binding site" evidence="1">
    <location>
        <begin position="141"/>
        <end position="145"/>
    </location>
    <ligand>
        <name>D-ribulose 5-phosphate</name>
        <dbReference type="ChEBI" id="CHEBI:58121"/>
    </ligand>
</feature>
<feature type="binding site" evidence="1">
    <location>
        <position position="144"/>
    </location>
    <ligand>
        <name>Mg(2+)</name>
        <dbReference type="ChEBI" id="CHEBI:18420"/>
        <label>2</label>
    </ligand>
</feature>
<feature type="binding site" evidence="1">
    <location>
        <position position="165"/>
    </location>
    <ligand>
        <name>D-ribulose 5-phosphate</name>
        <dbReference type="ChEBI" id="CHEBI:58121"/>
    </ligand>
</feature>
<feature type="binding site" evidence="1">
    <location>
        <begin position="259"/>
        <end position="263"/>
    </location>
    <ligand>
        <name>GTP</name>
        <dbReference type="ChEBI" id="CHEBI:37565"/>
    </ligand>
</feature>
<feature type="binding site" evidence="1">
    <location>
        <position position="264"/>
    </location>
    <ligand>
        <name>Zn(2+)</name>
        <dbReference type="ChEBI" id="CHEBI:29105"/>
        <note>catalytic</note>
    </ligand>
</feature>
<feature type="binding site" evidence="1">
    <location>
        <position position="275"/>
    </location>
    <ligand>
        <name>Zn(2+)</name>
        <dbReference type="ChEBI" id="CHEBI:29105"/>
        <note>catalytic</note>
    </ligand>
</feature>
<feature type="binding site" evidence="1">
    <location>
        <position position="277"/>
    </location>
    <ligand>
        <name>Zn(2+)</name>
        <dbReference type="ChEBI" id="CHEBI:29105"/>
        <note>catalytic</note>
    </ligand>
</feature>
<feature type="binding site" evidence="1">
    <location>
        <position position="280"/>
    </location>
    <ligand>
        <name>GTP</name>
        <dbReference type="ChEBI" id="CHEBI:37565"/>
    </ligand>
</feature>
<feature type="binding site" evidence="1">
    <location>
        <begin position="303"/>
        <end position="305"/>
    </location>
    <ligand>
        <name>GTP</name>
        <dbReference type="ChEBI" id="CHEBI:37565"/>
    </ligand>
</feature>
<feature type="binding site" evidence="1">
    <location>
        <position position="325"/>
    </location>
    <ligand>
        <name>GTP</name>
        <dbReference type="ChEBI" id="CHEBI:37565"/>
    </ligand>
</feature>
<feature type="binding site" evidence="1">
    <location>
        <position position="360"/>
    </location>
    <ligand>
        <name>GTP</name>
        <dbReference type="ChEBI" id="CHEBI:37565"/>
    </ligand>
</feature>
<feature type="binding site" evidence="1">
    <location>
        <position position="365"/>
    </location>
    <ligand>
        <name>GTP</name>
        <dbReference type="ChEBI" id="CHEBI:37565"/>
    </ligand>
</feature>
<feature type="site" description="Essential for DHBP synthase activity" evidence="1">
    <location>
        <position position="127"/>
    </location>
</feature>
<feature type="site" description="Essential for DHBP synthase activity" evidence="1">
    <location>
        <position position="165"/>
    </location>
</feature>
<evidence type="ECO:0000255" key="1">
    <source>
        <dbReference type="HAMAP-Rule" id="MF_01283"/>
    </source>
</evidence>
<dbReference type="EC" id="4.1.99.12" evidence="1"/>
<dbReference type="EC" id="3.5.4.25" evidence="1"/>
<dbReference type="EMBL" id="LT708304">
    <property type="protein sequence ID" value="SIU00053.1"/>
    <property type="molecule type" value="Genomic_DNA"/>
</dbReference>
<dbReference type="RefSeq" id="NP_855102.1">
    <property type="nucleotide sequence ID" value="NC_002945.3"/>
</dbReference>
<dbReference type="RefSeq" id="WP_003407334.1">
    <property type="nucleotide sequence ID" value="NC_002945.4"/>
</dbReference>
<dbReference type="SMR" id="P0A5V1"/>
<dbReference type="KEGG" id="mbo:BQ2027_MB1450"/>
<dbReference type="PATRIC" id="fig|233413.5.peg.1585"/>
<dbReference type="UniPathway" id="UPA00275">
    <property type="reaction ID" value="UER00399"/>
</dbReference>
<dbReference type="UniPathway" id="UPA00275">
    <property type="reaction ID" value="UER00400"/>
</dbReference>
<dbReference type="Proteomes" id="UP000001419">
    <property type="component" value="Chromosome"/>
</dbReference>
<dbReference type="GO" id="GO:0005829">
    <property type="term" value="C:cytosol"/>
    <property type="evidence" value="ECO:0007669"/>
    <property type="project" value="TreeGrafter"/>
</dbReference>
<dbReference type="GO" id="GO:0008686">
    <property type="term" value="F:3,4-dihydroxy-2-butanone-4-phosphate synthase activity"/>
    <property type="evidence" value="ECO:0007669"/>
    <property type="project" value="UniProtKB-UniRule"/>
</dbReference>
<dbReference type="GO" id="GO:0005525">
    <property type="term" value="F:GTP binding"/>
    <property type="evidence" value="ECO:0007669"/>
    <property type="project" value="UniProtKB-KW"/>
</dbReference>
<dbReference type="GO" id="GO:0003935">
    <property type="term" value="F:GTP cyclohydrolase II activity"/>
    <property type="evidence" value="ECO:0007669"/>
    <property type="project" value="UniProtKB-UniRule"/>
</dbReference>
<dbReference type="GO" id="GO:0000287">
    <property type="term" value="F:magnesium ion binding"/>
    <property type="evidence" value="ECO:0007669"/>
    <property type="project" value="UniProtKB-UniRule"/>
</dbReference>
<dbReference type="GO" id="GO:0030145">
    <property type="term" value="F:manganese ion binding"/>
    <property type="evidence" value="ECO:0007669"/>
    <property type="project" value="UniProtKB-UniRule"/>
</dbReference>
<dbReference type="GO" id="GO:0008270">
    <property type="term" value="F:zinc ion binding"/>
    <property type="evidence" value="ECO:0007669"/>
    <property type="project" value="UniProtKB-UniRule"/>
</dbReference>
<dbReference type="GO" id="GO:0009231">
    <property type="term" value="P:riboflavin biosynthetic process"/>
    <property type="evidence" value="ECO:0007669"/>
    <property type="project" value="UniProtKB-UniRule"/>
</dbReference>
<dbReference type="CDD" id="cd00641">
    <property type="entry name" value="GTP_cyclohydro2"/>
    <property type="match status" value="1"/>
</dbReference>
<dbReference type="FunFam" id="3.40.50.10990:FF:000001">
    <property type="entry name" value="Riboflavin biosynthesis protein RibBA"/>
    <property type="match status" value="1"/>
</dbReference>
<dbReference type="FunFam" id="3.90.870.10:FF:000001">
    <property type="entry name" value="Riboflavin biosynthesis protein RibBA"/>
    <property type="match status" value="1"/>
</dbReference>
<dbReference type="Gene3D" id="3.90.870.10">
    <property type="entry name" value="DHBP synthase"/>
    <property type="match status" value="1"/>
</dbReference>
<dbReference type="Gene3D" id="3.40.50.10990">
    <property type="entry name" value="GTP cyclohydrolase II"/>
    <property type="match status" value="1"/>
</dbReference>
<dbReference type="HAMAP" id="MF_00179">
    <property type="entry name" value="RibA"/>
    <property type="match status" value="1"/>
</dbReference>
<dbReference type="HAMAP" id="MF_00180">
    <property type="entry name" value="RibB"/>
    <property type="match status" value="1"/>
</dbReference>
<dbReference type="HAMAP" id="MF_01283">
    <property type="entry name" value="RibBA"/>
    <property type="match status" value="1"/>
</dbReference>
<dbReference type="InterPro" id="IPR017945">
    <property type="entry name" value="DHBP_synth_RibB-like_a/b_dom"/>
</dbReference>
<dbReference type="InterPro" id="IPR000422">
    <property type="entry name" value="DHBP_synthase_RibB"/>
</dbReference>
<dbReference type="InterPro" id="IPR032677">
    <property type="entry name" value="GTP_cyclohydro_II"/>
</dbReference>
<dbReference type="InterPro" id="IPR000926">
    <property type="entry name" value="RibA"/>
</dbReference>
<dbReference type="InterPro" id="IPR036144">
    <property type="entry name" value="RibA-like_sf"/>
</dbReference>
<dbReference type="InterPro" id="IPR016299">
    <property type="entry name" value="Riboflavin_synth_RibBA"/>
</dbReference>
<dbReference type="NCBIfam" id="NF001591">
    <property type="entry name" value="PRK00393.1"/>
    <property type="match status" value="1"/>
</dbReference>
<dbReference type="NCBIfam" id="NF006803">
    <property type="entry name" value="PRK09311.1"/>
    <property type="match status" value="1"/>
</dbReference>
<dbReference type="NCBIfam" id="TIGR00505">
    <property type="entry name" value="ribA"/>
    <property type="match status" value="1"/>
</dbReference>
<dbReference type="NCBIfam" id="TIGR00506">
    <property type="entry name" value="ribB"/>
    <property type="match status" value="1"/>
</dbReference>
<dbReference type="PANTHER" id="PTHR21327:SF18">
    <property type="entry name" value="3,4-DIHYDROXY-2-BUTANONE 4-PHOSPHATE SYNTHASE"/>
    <property type="match status" value="1"/>
</dbReference>
<dbReference type="PANTHER" id="PTHR21327">
    <property type="entry name" value="GTP CYCLOHYDROLASE II-RELATED"/>
    <property type="match status" value="1"/>
</dbReference>
<dbReference type="Pfam" id="PF00926">
    <property type="entry name" value="DHBP_synthase"/>
    <property type="match status" value="1"/>
</dbReference>
<dbReference type="Pfam" id="PF00925">
    <property type="entry name" value="GTP_cyclohydro2"/>
    <property type="match status" value="1"/>
</dbReference>
<dbReference type="PIRSF" id="PIRSF001259">
    <property type="entry name" value="RibA"/>
    <property type="match status" value="1"/>
</dbReference>
<dbReference type="SUPFAM" id="SSF142695">
    <property type="entry name" value="RibA-like"/>
    <property type="match status" value="1"/>
</dbReference>
<dbReference type="SUPFAM" id="SSF55821">
    <property type="entry name" value="YrdC/RibB"/>
    <property type="match status" value="1"/>
</dbReference>
<keyword id="KW-0342">GTP-binding</keyword>
<keyword id="KW-0378">Hydrolase</keyword>
<keyword id="KW-0456">Lyase</keyword>
<keyword id="KW-0460">Magnesium</keyword>
<keyword id="KW-0464">Manganese</keyword>
<keyword id="KW-0479">Metal-binding</keyword>
<keyword id="KW-0511">Multifunctional enzyme</keyword>
<keyword id="KW-0547">Nucleotide-binding</keyword>
<keyword id="KW-1185">Reference proteome</keyword>
<keyword id="KW-0686">Riboflavin biosynthesis</keyword>
<keyword id="KW-0862">Zinc</keyword>
<comment type="function">
    <text evidence="1">Catalyzes the conversion of D-ribulose 5-phosphate to formate and 3,4-dihydroxy-2-butanone 4-phosphate.</text>
</comment>
<comment type="function">
    <text evidence="1">Catalyzes the conversion of GTP to 2,5-diamino-6-ribosylamino-4(3H)-pyrimidinone 5'-phosphate (DARP), formate and pyrophosphate.</text>
</comment>
<comment type="catalytic activity">
    <reaction evidence="1">
        <text>D-ribulose 5-phosphate = (2S)-2-hydroxy-3-oxobutyl phosphate + formate + H(+)</text>
        <dbReference type="Rhea" id="RHEA:18457"/>
        <dbReference type="ChEBI" id="CHEBI:15378"/>
        <dbReference type="ChEBI" id="CHEBI:15740"/>
        <dbReference type="ChEBI" id="CHEBI:58121"/>
        <dbReference type="ChEBI" id="CHEBI:58830"/>
        <dbReference type="EC" id="4.1.99.12"/>
    </reaction>
</comment>
<comment type="catalytic activity">
    <reaction evidence="1">
        <text>GTP + 4 H2O = 2,5-diamino-6-hydroxy-4-(5-phosphoribosylamino)-pyrimidine + formate + 2 phosphate + 3 H(+)</text>
        <dbReference type="Rhea" id="RHEA:23704"/>
        <dbReference type="ChEBI" id="CHEBI:15377"/>
        <dbReference type="ChEBI" id="CHEBI:15378"/>
        <dbReference type="ChEBI" id="CHEBI:15740"/>
        <dbReference type="ChEBI" id="CHEBI:37565"/>
        <dbReference type="ChEBI" id="CHEBI:43474"/>
        <dbReference type="ChEBI" id="CHEBI:58614"/>
        <dbReference type="EC" id="3.5.4.25"/>
    </reaction>
</comment>
<comment type="cofactor">
    <cofactor evidence="1">
        <name>Mg(2+)</name>
        <dbReference type="ChEBI" id="CHEBI:18420"/>
    </cofactor>
    <cofactor evidence="1">
        <name>Mn(2+)</name>
        <dbReference type="ChEBI" id="CHEBI:29035"/>
    </cofactor>
    <text evidence="1">Binds 2 divalent metal cations per subunit. Magnesium or manganese.</text>
</comment>
<comment type="cofactor">
    <cofactor evidence="1">
        <name>Zn(2+)</name>
        <dbReference type="ChEBI" id="CHEBI:29105"/>
    </cofactor>
    <text evidence="1">Binds 1 zinc ion per subunit.</text>
</comment>
<comment type="pathway">
    <text evidence="1">Cofactor biosynthesis; riboflavin biosynthesis; 2-hydroxy-3-oxobutyl phosphate from D-ribulose 5-phosphate: step 1/1.</text>
</comment>
<comment type="pathway">
    <text evidence="1">Cofactor biosynthesis; riboflavin biosynthesis; 5-amino-6-(D-ribitylamino)uracil from GTP: step 1/4.</text>
</comment>
<comment type="similarity">
    <text evidence="1">In the N-terminal section; belongs to the DHBP synthase family.</text>
</comment>
<comment type="similarity">
    <text evidence="1">In the C-terminal section; belongs to the GTP cyclohydrolase II family.</text>
</comment>
<organism>
    <name type="scientific">Mycobacterium bovis (strain ATCC BAA-935 / AF2122/97)</name>
    <dbReference type="NCBI Taxonomy" id="233413"/>
    <lineage>
        <taxon>Bacteria</taxon>
        <taxon>Bacillati</taxon>
        <taxon>Actinomycetota</taxon>
        <taxon>Actinomycetes</taxon>
        <taxon>Mycobacteriales</taxon>
        <taxon>Mycobacteriaceae</taxon>
        <taxon>Mycobacterium</taxon>
        <taxon>Mycobacterium tuberculosis complex</taxon>
    </lineage>
</organism>
<protein>
    <recommendedName>
        <fullName evidence="1">Riboflavin biosynthesis protein RibBA</fullName>
    </recommendedName>
    <domain>
        <recommendedName>
            <fullName evidence="1">3,4-dihydroxy-2-butanone 4-phosphate synthase</fullName>
            <shortName evidence="1">DHBP synthase</shortName>
            <ecNumber evidence="1">4.1.99.12</ecNumber>
        </recommendedName>
    </domain>
    <domain>
        <recommendedName>
            <fullName evidence="1">GTP cyclohydrolase-2</fullName>
            <ecNumber evidence="1">3.5.4.25</ecNumber>
        </recommendedName>
        <alternativeName>
            <fullName evidence="1">GTP cyclohydrolase II</fullName>
        </alternativeName>
    </domain>
</protein>
<reference key="1">
    <citation type="journal article" date="2003" name="Proc. Natl. Acad. Sci. U.S.A.">
        <title>The complete genome sequence of Mycobacterium bovis.</title>
        <authorList>
            <person name="Garnier T."/>
            <person name="Eiglmeier K."/>
            <person name="Camus J.-C."/>
            <person name="Medina N."/>
            <person name="Mansoor H."/>
            <person name="Pryor M."/>
            <person name="Duthoy S."/>
            <person name="Grondin S."/>
            <person name="Lacroix C."/>
            <person name="Monsempe C."/>
            <person name="Simon S."/>
            <person name="Harris B."/>
            <person name="Atkin R."/>
            <person name="Doggett J."/>
            <person name="Mayes R."/>
            <person name="Keating L."/>
            <person name="Wheeler P.R."/>
            <person name="Parkhill J."/>
            <person name="Barrell B.G."/>
            <person name="Cole S.T."/>
            <person name="Gordon S.V."/>
            <person name="Hewinson R.G."/>
        </authorList>
    </citation>
    <scope>NUCLEOTIDE SEQUENCE [LARGE SCALE GENOMIC DNA]</scope>
    <source>
        <strain>ATCC BAA-935 / AF2122/97</strain>
    </source>
</reference>
<reference key="2">
    <citation type="journal article" date="2017" name="Genome Announc.">
        <title>Updated reference genome sequence and annotation of Mycobacterium bovis AF2122/97.</title>
        <authorList>
            <person name="Malone K.M."/>
            <person name="Farrell D."/>
            <person name="Stuber T.P."/>
            <person name="Schubert O.T."/>
            <person name="Aebersold R."/>
            <person name="Robbe-Austerman S."/>
            <person name="Gordon S.V."/>
        </authorList>
    </citation>
    <scope>NUCLEOTIDE SEQUENCE [LARGE SCALE GENOMIC DNA]</scope>
    <scope>GENOME REANNOTATION</scope>
    <source>
        <strain>ATCC BAA-935 / AF2122/97</strain>
    </source>
</reference>
<name>RIBBA_MYCBO</name>